<dbReference type="EC" id="7.6.2.11" evidence="1"/>
<dbReference type="EMBL" id="AE016827">
    <property type="protein sequence ID" value="AAU37419.1"/>
    <property type="molecule type" value="Genomic_DNA"/>
</dbReference>
<dbReference type="RefSeq" id="WP_011199991.1">
    <property type="nucleotide sequence ID" value="NC_006300.1"/>
</dbReference>
<dbReference type="SMR" id="Q65UE1"/>
<dbReference type="STRING" id="221988.MS0812"/>
<dbReference type="KEGG" id="msu:MS0812"/>
<dbReference type="eggNOG" id="COG3842">
    <property type="taxonomic scope" value="Bacteria"/>
</dbReference>
<dbReference type="HOGENOM" id="CLU_000604_1_1_6"/>
<dbReference type="OrthoDB" id="9802264at2"/>
<dbReference type="Proteomes" id="UP000000607">
    <property type="component" value="Chromosome"/>
</dbReference>
<dbReference type="GO" id="GO:0043190">
    <property type="term" value="C:ATP-binding cassette (ABC) transporter complex"/>
    <property type="evidence" value="ECO:0007669"/>
    <property type="project" value="InterPro"/>
</dbReference>
<dbReference type="GO" id="GO:0015594">
    <property type="term" value="F:ABC-type putrescine transporter activity"/>
    <property type="evidence" value="ECO:0007669"/>
    <property type="project" value="InterPro"/>
</dbReference>
<dbReference type="GO" id="GO:0005524">
    <property type="term" value="F:ATP binding"/>
    <property type="evidence" value="ECO:0007669"/>
    <property type="project" value="UniProtKB-KW"/>
</dbReference>
<dbReference type="GO" id="GO:0016887">
    <property type="term" value="F:ATP hydrolysis activity"/>
    <property type="evidence" value="ECO:0007669"/>
    <property type="project" value="InterPro"/>
</dbReference>
<dbReference type="CDD" id="cd03300">
    <property type="entry name" value="ABC_PotA_N"/>
    <property type="match status" value="1"/>
</dbReference>
<dbReference type="FunFam" id="3.40.50.300:FF:000133">
    <property type="entry name" value="Spermidine/putrescine import ATP-binding protein PotA"/>
    <property type="match status" value="1"/>
</dbReference>
<dbReference type="Gene3D" id="2.40.50.100">
    <property type="match status" value="1"/>
</dbReference>
<dbReference type="Gene3D" id="3.40.50.300">
    <property type="entry name" value="P-loop containing nucleotide triphosphate hydrolases"/>
    <property type="match status" value="1"/>
</dbReference>
<dbReference type="InterPro" id="IPR003593">
    <property type="entry name" value="AAA+_ATPase"/>
</dbReference>
<dbReference type="InterPro" id="IPR050093">
    <property type="entry name" value="ABC_SmlMolc_Importer"/>
</dbReference>
<dbReference type="InterPro" id="IPR003439">
    <property type="entry name" value="ABC_transporter-like_ATP-bd"/>
</dbReference>
<dbReference type="InterPro" id="IPR017871">
    <property type="entry name" value="ABC_transporter-like_CS"/>
</dbReference>
<dbReference type="InterPro" id="IPR008995">
    <property type="entry name" value="Mo/tungstate-bd_C_term_dom"/>
</dbReference>
<dbReference type="InterPro" id="IPR027417">
    <property type="entry name" value="P-loop_NTPase"/>
</dbReference>
<dbReference type="InterPro" id="IPR005893">
    <property type="entry name" value="PotA-like"/>
</dbReference>
<dbReference type="InterPro" id="IPR017879">
    <property type="entry name" value="PotA_ATP-bd"/>
</dbReference>
<dbReference type="InterPro" id="IPR013611">
    <property type="entry name" value="Transp-assoc_OB_typ2"/>
</dbReference>
<dbReference type="NCBIfam" id="TIGR01187">
    <property type="entry name" value="potA"/>
    <property type="match status" value="1"/>
</dbReference>
<dbReference type="NCBIfam" id="NF006987">
    <property type="entry name" value="PRK09452.1"/>
    <property type="match status" value="1"/>
</dbReference>
<dbReference type="PANTHER" id="PTHR42781">
    <property type="entry name" value="SPERMIDINE/PUTRESCINE IMPORT ATP-BINDING PROTEIN POTA"/>
    <property type="match status" value="1"/>
</dbReference>
<dbReference type="PANTHER" id="PTHR42781:SF4">
    <property type="entry name" value="SPERMIDINE_PUTRESCINE IMPORT ATP-BINDING PROTEIN POTA"/>
    <property type="match status" value="1"/>
</dbReference>
<dbReference type="Pfam" id="PF00005">
    <property type="entry name" value="ABC_tran"/>
    <property type="match status" value="1"/>
</dbReference>
<dbReference type="Pfam" id="PF08402">
    <property type="entry name" value="TOBE_2"/>
    <property type="match status" value="1"/>
</dbReference>
<dbReference type="SMART" id="SM00382">
    <property type="entry name" value="AAA"/>
    <property type="match status" value="1"/>
</dbReference>
<dbReference type="SUPFAM" id="SSF50331">
    <property type="entry name" value="MOP-like"/>
    <property type="match status" value="1"/>
</dbReference>
<dbReference type="SUPFAM" id="SSF52540">
    <property type="entry name" value="P-loop containing nucleoside triphosphate hydrolases"/>
    <property type="match status" value="1"/>
</dbReference>
<dbReference type="PROSITE" id="PS00211">
    <property type="entry name" value="ABC_TRANSPORTER_1"/>
    <property type="match status" value="1"/>
</dbReference>
<dbReference type="PROSITE" id="PS50893">
    <property type="entry name" value="ABC_TRANSPORTER_2"/>
    <property type="match status" value="1"/>
</dbReference>
<dbReference type="PROSITE" id="PS51305">
    <property type="entry name" value="POTA"/>
    <property type="match status" value="1"/>
</dbReference>
<keyword id="KW-0067">ATP-binding</keyword>
<keyword id="KW-0997">Cell inner membrane</keyword>
<keyword id="KW-1003">Cell membrane</keyword>
<keyword id="KW-0472">Membrane</keyword>
<keyword id="KW-0547">Nucleotide-binding</keyword>
<keyword id="KW-1278">Translocase</keyword>
<keyword id="KW-0813">Transport</keyword>
<proteinExistence type="inferred from homology"/>
<accession>Q65UE1</accession>
<comment type="function">
    <text evidence="1">Part of the ABC transporter complex PotABCD involved in spermidine/putrescine import. Responsible for energy coupling to the transport system.</text>
</comment>
<comment type="catalytic activity">
    <reaction evidence="1">
        <text>ATP + H2O + polyamine-[polyamine-binding protein]Side 1 = ADP + phosphate + polyamineSide 2 + [polyamine-binding protein]Side 1.</text>
        <dbReference type="EC" id="7.6.2.11"/>
    </reaction>
</comment>
<comment type="subunit">
    <text evidence="1">The complex is composed of two ATP-binding proteins (PotA), two transmembrane proteins (PotB and PotC) and a solute-binding protein (PotD).</text>
</comment>
<comment type="subcellular location">
    <subcellularLocation>
        <location evidence="1">Cell inner membrane</location>
        <topology evidence="1">Peripheral membrane protein</topology>
    </subcellularLocation>
</comment>
<comment type="similarity">
    <text evidence="1">Belongs to the ABC transporter superfamily. Spermidine/putrescine importer (TC 3.A.1.11.1) family.</text>
</comment>
<evidence type="ECO:0000255" key="1">
    <source>
        <dbReference type="HAMAP-Rule" id="MF_01726"/>
    </source>
</evidence>
<reference key="1">
    <citation type="journal article" date="2004" name="Nat. Biotechnol.">
        <title>The genome sequence of the capnophilic rumen bacterium Mannheimia succiniciproducens.</title>
        <authorList>
            <person name="Hong S.H."/>
            <person name="Kim J.S."/>
            <person name="Lee S.Y."/>
            <person name="In Y.H."/>
            <person name="Choi S.S."/>
            <person name="Rih J.-K."/>
            <person name="Kim C.H."/>
            <person name="Jeong H."/>
            <person name="Hur C.G."/>
            <person name="Kim J.J."/>
        </authorList>
    </citation>
    <scope>NUCLEOTIDE SEQUENCE [LARGE SCALE GENOMIC DNA]</scope>
    <source>
        <strain>KCTC 0769BP / MBEL55E</strain>
    </source>
</reference>
<organism>
    <name type="scientific">Mannheimia succiniciproducens (strain KCTC 0769BP / MBEL55E)</name>
    <dbReference type="NCBI Taxonomy" id="221988"/>
    <lineage>
        <taxon>Bacteria</taxon>
        <taxon>Pseudomonadati</taxon>
        <taxon>Pseudomonadota</taxon>
        <taxon>Gammaproteobacteria</taxon>
        <taxon>Pasteurellales</taxon>
        <taxon>Pasteurellaceae</taxon>
        <taxon>Basfia</taxon>
    </lineage>
</organism>
<name>POTA_MANSM</name>
<sequence length="373" mass="42523">MENIVQSKPIIELRSLKKSYNENTIIDNFNLTINNGEFLTILGPSGCGKTTVLRLIAGFEEANGGQIILDGEDVTDLPAEHRPVNTVFQSYALFPHMTIFENVAFGLRMQKVPNEEIKPRVLEALRMVQLEEMADRKPTQLSGGQQQRIAIARAVVNKPKVLLLDESLSALDYKLRKQMQNELKALQRKLGITFIFVTHDQEEALTMSDRIIVLRKGNIEQDGSPREIYEEPSNLFVAKFIGEINIFDAQVLNRVDEKRVRANVEGRVCDIYTDLAVKEGQKLKVLLRPEDVQLEELDENEQSSAIIGHIRERNYKGMTLESTVELEHNNKLVLVSEFFNEDDPNIDHSLDQRVGVTWIEKWEVVLNDENDNA</sequence>
<gene>
    <name evidence="1" type="primary">potA</name>
    <name type="ordered locus">MS0812</name>
</gene>
<feature type="chain" id="PRO_0000286247" description="Spermidine/putrescine import ATP-binding protein PotA">
    <location>
        <begin position="1"/>
        <end position="373"/>
    </location>
</feature>
<feature type="domain" description="ABC transporter" evidence="1">
    <location>
        <begin position="11"/>
        <end position="241"/>
    </location>
</feature>
<feature type="binding site" evidence="1">
    <location>
        <begin position="43"/>
        <end position="50"/>
    </location>
    <ligand>
        <name>ATP</name>
        <dbReference type="ChEBI" id="CHEBI:30616"/>
    </ligand>
</feature>
<protein>
    <recommendedName>
        <fullName evidence="1">Spermidine/putrescine import ATP-binding protein PotA</fullName>
        <ecNumber evidence="1">7.6.2.11</ecNumber>
    </recommendedName>
</protein>